<dbReference type="EMBL" id="S58435">
    <property type="protein sequence ID" value="AAB26144.1"/>
    <property type="molecule type" value="Genomic_RNA"/>
</dbReference>
<dbReference type="PIR" id="D48556">
    <property type="entry name" value="D48556"/>
</dbReference>
<dbReference type="SMR" id="P35976"/>
<dbReference type="TCDB" id="9.A.73.4.2">
    <property type="family name" value="the virus matrix protein (vmp) family"/>
</dbReference>
<dbReference type="Proteomes" id="UP000007775">
    <property type="component" value="Genome"/>
</dbReference>
<dbReference type="GO" id="GO:0020002">
    <property type="term" value="C:host cell plasma membrane"/>
    <property type="evidence" value="ECO:0007669"/>
    <property type="project" value="UniProtKB-SubCell"/>
</dbReference>
<dbReference type="GO" id="GO:0016020">
    <property type="term" value="C:membrane"/>
    <property type="evidence" value="ECO:0007669"/>
    <property type="project" value="UniProtKB-KW"/>
</dbReference>
<dbReference type="GO" id="GO:0019031">
    <property type="term" value="C:viral envelope"/>
    <property type="evidence" value="ECO:0007669"/>
    <property type="project" value="UniProtKB-KW"/>
</dbReference>
<dbReference type="GO" id="GO:0008289">
    <property type="term" value="F:lipid binding"/>
    <property type="evidence" value="ECO:0007669"/>
    <property type="project" value="UniProtKB-KW"/>
</dbReference>
<dbReference type="GO" id="GO:0039660">
    <property type="term" value="F:structural constituent of virion"/>
    <property type="evidence" value="ECO:0007669"/>
    <property type="project" value="UniProtKB-KW"/>
</dbReference>
<dbReference type="GO" id="GO:0019064">
    <property type="term" value="P:fusion of virus membrane with host plasma membrane"/>
    <property type="evidence" value="ECO:0000315"/>
    <property type="project" value="CACAO"/>
</dbReference>
<dbReference type="GO" id="GO:0019068">
    <property type="term" value="P:virion assembly"/>
    <property type="evidence" value="ECO:0007669"/>
    <property type="project" value="InterPro"/>
</dbReference>
<dbReference type="FunFam" id="2.70.20.50:FF:000001">
    <property type="entry name" value="Matrix protein"/>
    <property type="match status" value="1"/>
</dbReference>
<dbReference type="FunFam" id="2.70.20.60:FF:000001">
    <property type="entry name" value="Matrix protein"/>
    <property type="match status" value="1"/>
</dbReference>
<dbReference type="Gene3D" id="2.70.20.60">
    <property type="entry name" value="Viral matrix protein, C-terminal domain"/>
    <property type="match status" value="1"/>
</dbReference>
<dbReference type="Gene3D" id="2.70.20.50">
    <property type="entry name" value="Viral matrix protein, N-terminal domain"/>
    <property type="match status" value="1"/>
</dbReference>
<dbReference type="InterPro" id="IPR042539">
    <property type="entry name" value="Matrix_C"/>
</dbReference>
<dbReference type="InterPro" id="IPR042540">
    <property type="entry name" value="Matrix_N"/>
</dbReference>
<dbReference type="InterPro" id="IPR055413">
    <property type="entry name" value="Matrix_Paramyxo_C"/>
</dbReference>
<dbReference type="InterPro" id="IPR000982">
    <property type="entry name" value="Matrix_Paramyxo_N"/>
</dbReference>
<dbReference type="Pfam" id="PF23765">
    <property type="entry name" value="Matrix_Paramyxo_C"/>
    <property type="match status" value="1"/>
</dbReference>
<dbReference type="Pfam" id="PF00661">
    <property type="entry name" value="Matrix_Paramyxo_N"/>
    <property type="match status" value="1"/>
</dbReference>
<gene>
    <name type="primary">M</name>
</gene>
<organism>
    <name type="scientific">Measles virus (strain Edmonston-AIK-C vaccine)</name>
    <name type="common">MeV</name>
    <name type="synonym">Subacute sclerose panencephalitis virus</name>
    <dbReference type="NCBI Taxonomy" id="36408"/>
    <lineage>
        <taxon>Viruses</taxon>
        <taxon>Riboviria</taxon>
        <taxon>Orthornavirae</taxon>
        <taxon>Negarnaviricota</taxon>
        <taxon>Haploviricotina</taxon>
        <taxon>Monjiviricetes</taxon>
        <taxon>Mononegavirales</taxon>
        <taxon>Paramyxoviridae</taxon>
        <taxon>Orthoparamyxovirinae</taxon>
        <taxon>Morbillivirus</taxon>
        <taxon>Morbillivirus hominis</taxon>
        <taxon>Measles morbillivirus</taxon>
    </lineage>
</organism>
<reference key="1">
    <citation type="journal article" date="1993" name="Virus Genes">
        <title>Molecular cloning and complete nucleotide sequence of genomic RNA of the AIK-C strain of attenuated measles virus.</title>
        <authorList>
            <person name="Mori T."/>
            <person name="Sasaki K."/>
            <person name="Hashimoto H."/>
            <person name="Makino S."/>
        </authorList>
    </citation>
    <scope>NUCLEOTIDE SEQUENCE [GENOMIC RNA]</scope>
</reference>
<proteinExistence type="inferred from homology"/>
<protein>
    <recommendedName>
        <fullName>Matrix protein</fullName>
    </recommendedName>
</protein>
<sequence>MTEIYDFDKSAWDIKGSIAPIQPTTYSDGRLVPQVRVIDPGLGDRKDECFMYMSLLGVVEDSDPLGPPIGRAFGSLPLGVGRSTAKPEKLLKEATELDIVVRRTAGLNEKLVFYNNTPLTLLTPWRKVLTTGSVFNANQVCNAVNLIPLDTPQRFRVVYMSITRLSDNGYYTVPRRMLEFRSVNAVAFNLLVTLRIDKAIGPGKIIDNTEQLPEATFMVHIGNFRRKKSEVYSADYCKMKIEKMGLVFALGGIGGTSLHIRSTGKMSKTLHAQLGFKKTLCYPLMDINEDLNRLLWRSRCKIVRIQAVLQPSVPQEFRIYDDVIINDDQGLFKVL</sequence>
<accession>P35976</accession>
<comment type="function">
    <text evidence="1">The M protein has a crucial role in virus assembly and interacts with the RNP complex as well as with the viral membrane. Associates with phosphatidylserine (PS) and phosphatidylinositol 4,5-bisphosphate (PIP2) at the plasma membrane. Interaction with PIP2 triggers matrix protein lattice polymerization. Matrix proteins induce host membrane deformation and curvature necessary for virion assembly/budding.</text>
</comment>
<comment type="subunit">
    <text evidence="1">Homodimer. Dimerization is critical for virion formation. Interacts with host ANP32B.</text>
</comment>
<comment type="subcellular location">
    <subcellularLocation>
        <location evidence="1">Virion</location>
    </subcellularLocation>
    <subcellularLocation>
        <location evidence="1">Host cell membrane</location>
    </subcellularLocation>
</comment>
<comment type="similarity">
    <text evidence="2">Belongs to the morbillivirus/respirovirus/rubulavirus M protein family.</text>
</comment>
<evidence type="ECO:0000250" key="1">
    <source>
        <dbReference type="UniProtKB" id="Q9W850"/>
    </source>
</evidence>
<evidence type="ECO:0000305" key="2"/>
<organismHost>
    <name type="scientific">Homo sapiens</name>
    <name type="common">Human</name>
    <dbReference type="NCBI Taxonomy" id="9606"/>
</organismHost>
<keyword id="KW-1032">Host cell membrane</keyword>
<keyword id="KW-1043">Host membrane</keyword>
<keyword id="KW-0945">Host-virus interaction</keyword>
<keyword id="KW-0446">Lipid-binding</keyword>
<keyword id="KW-0472">Membrane</keyword>
<keyword id="KW-0261">Viral envelope protein</keyword>
<keyword id="KW-0468">Viral matrix protein</keyword>
<keyword id="KW-0946">Virion</keyword>
<feature type="chain" id="PRO_0000142750" description="Matrix protein">
    <location>
        <begin position="1"/>
        <end position="335"/>
    </location>
</feature>
<name>MATRX_MEASA</name>